<dbReference type="EC" id="2.1.1.33" evidence="2"/>
<dbReference type="EMBL" id="AE007317">
    <property type="protein sequence ID" value="AAK99280.1"/>
    <property type="molecule type" value="Genomic_DNA"/>
</dbReference>
<dbReference type="PIR" id="D97931">
    <property type="entry name" value="D97931"/>
</dbReference>
<dbReference type="RefSeq" id="NP_358070.1">
    <property type="nucleotide sequence ID" value="NC_003098.1"/>
</dbReference>
<dbReference type="RefSeq" id="WP_001266083.1">
    <property type="nucleotide sequence ID" value="NC_003098.1"/>
</dbReference>
<dbReference type="SMR" id="P67507"/>
<dbReference type="STRING" id="171101.spr0476"/>
<dbReference type="GeneID" id="45654031"/>
<dbReference type="KEGG" id="spr:spr0476"/>
<dbReference type="PATRIC" id="fig|171101.6.peg.523"/>
<dbReference type="eggNOG" id="COG0220">
    <property type="taxonomic scope" value="Bacteria"/>
</dbReference>
<dbReference type="HOGENOM" id="CLU_050910_2_1_9"/>
<dbReference type="UniPathway" id="UPA00989"/>
<dbReference type="Proteomes" id="UP000000586">
    <property type="component" value="Chromosome"/>
</dbReference>
<dbReference type="GO" id="GO:0043527">
    <property type="term" value="C:tRNA methyltransferase complex"/>
    <property type="evidence" value="ECO:0000318"/>
    <property type="project" value="GO_Central"/>
</dbReference>
<dbReference type="GO" id="GO:0008176">
    <property type="term" value="F:tRNA (guanine(46)-N7)-methyltransferase activity"/>
    <property type="evidence" value="ECO:0000318"/>
    <property type="project" value="GO_Central"/>
</dbReference>
<dbReference type="GO" id="GO:0036265">
    <property type="term" value="P:RNA (guanine-N7)-methylation"/>
    <property type="evidence" value="ECO:0000318"/>
    <property type="project" value="GO_Central"/>
</dbReference>
<dbReference type="GO" id="GO:0030488">
    <property type="term" value="P:tRNA methylation"/>
    <property type="evidence" value="ECO:0000318"/>
    <property type="project" value="GO_Central"/>
</dbReference>
<dbReference type="CDD" id="cd02440">
    <property type="entry name" value="AdoMet_MTases"/>
    <property type="match status" value="1"/>
</dbReference>
<dbReference type="FunFam" id="3.40.50.150:FF:000035">
    <property type="entry name" value="tRNA (guanine-N(7)-)-methyltransferase"/>
    <property type="match status" value="1"/>
</dbReference>
<dbReference type="Gene3D" id="3.40.50.150">
    <property type="entry name" value="Vaccinia Virus protein VP39"/>
    <property type="match status" value="1"/>
</dbReference>
<dbReference type="HAMAP" id="MF_01057">
    <property type="entry name" value="tRNA_methyltr_TrmB"/>
    <property type="match status" value="1"/>
</dbReference>
<dbReference type="InterPro" id="IPR029063">
    <property type="entry name" value="SAM-dependent_MTases_sf"/>
</dbReference>
<dbReference type="InterPro" id="IPR003358">
    <property type="entry name" value="tRNA_(Gua-N-7)_MeTrfase_Trmb"/>
</dbReference>
<dbReference type="InterPro" id="IPR055361">
    <property type="entry name" value="tRNA_methyltr_TrmB_bact"/>
</dbReference>
<dbReference type="NCBIfam" id="NF001080">
    <property type="entry name" value="PRK00121.2-2"/>
    <property type="match status" value="1"/>
</dbReference>
<dbReference type="NCBIfam" id="TIGR00091">
    <property type="entry name" value="tRNA (guanosine(46)-N7)-methyltransferase TrmB"/>
    <property type="match status" value="1"/>
</dbReference>
<dbReference type="PANTHER" id="PTHR23417">
    <property type="entry name" value="3-DEOXY-D-MANNO-OCTULOSONIC-ACID TRANSFERASE/TRNA GUANINE-N 7 - -METHYLTRANSFERASE"/>
    <property type="match status" value="1"/>
</dbReference>
<dbReference type="PANTHER" id="PTHR23417:SF14">
    <property type="entry name" value="PENTACOTRIPEPTIDE-REPEAT REGION OF PRORP DOMAIN-CONTAINING PROTEIN"/>
    <property type="match status" value="1"/>
</dbReference>
<dbReference type="Pfam" id="PF02390">
    <property type="entry name" value="Methyltransf_4"/>
    <property type="match status" value="1"/>
</dbReference>
<dbReference type="SUPFAM" id="SSF53335">
    <property type="entry name" value="S-adenosyl-L-methionine-dependent methyltransferases"/>
    <property type="match status" value="1"/>
</dbReference>
<dbReference type="PROSITE" id="PS51625">
    <property type="entry name" value="SAM_MT_TRMB"/>
    <property type="match status" value="1"/>
</dbReference>
<feature type="chain" id="PRO_0000171404" description="tRNA (guanine-N(7)-)-methyltransferase">
    <location>
        <begin position="1"/>
        <end position="211"/>
    </location>
</feature>
<feature type="region of interest" description="Interaction with RNA" evidence="2">
    <location>
        <begin position="124"/>
        <end position="129"/>
    </location>
</feature>
<feature type="active site" evidence="1">
    <location>
        <position position="118"/>
    </location>
</feature>
<feature type="binding site" evidence="2">
    <location>
        <position position="44"/>
    </location>
    <ligand>
        <name>S-adenosyl-L-methionine</name>
        <dbReference type="ChEBI" id="CHEBI:59789"/>
    </ligand>
</feature>
<feature type="binding site" evidence="2">
    <location>
        <position position="69"/>
    </location>
    <ligand>
        <name>S-adenosyl-L-methionine</name>
        <dbReference type="ChEBI" id="CHEBI:59789"/>
    </ligand>
</feature>
<feature type="binding site" evidence="2">
    <location>
        <position position="96"/>
    </location>
    <ligand>
        <name>S-adenosyl-L-methionine</name>
        <dbReference type="ChEBI" id="CHEBI:59789"/>
    </ligand>
</feature>
<feature type="binding site" evidence="2">
    <location>
        <position position="118"/>
    </location>
    <ligand>
        <name>S-adenosyl-L-methionine</name>
        <dbReference type="ChEBI" id="CHEBI:59789"/>
    </ligand>
</feature>
<feature type="binding site" evidence="2">
    <location>
        <position position="122"/>
    </location>
    <ligand>
        <name>substrate</name>
    </ligand>
</feature>
<feature type="binding site" evidence="2">
    <location>
        <position position="154"/>
    </location>
    <ligand>
        <name>substrate</name>
    </ligand>
</feature>
<feature type="binding site" evidence="2">
    <location>
        <begin position="191"/>
        <end position="194"/>
    </location>
    <ligand>
        <name>substrate</name>
    </ligand>
</feature>
<proteinExistence type="inferred from homology"/>
<evidence type="ECO:0000250" key="1"/>
<evidence type="ECO:0000255" key="2">
    <source>
        <dbReference type="HAMAP-Rule" id="MF_01057"/>
    </source>
</evidence>
<gene>
    <name evidence="2" type="primary">trmB</name>
    <name type="ordered locus">spr0476</name>
</gene>
<protein>
    <recommendedName>
        <fullName evidence="2">tRNA (guanine-N(7)-)-methyltransferase</fullName>
        <ecNumber evidence="2">2.1.1.33</ecNumber>
    </recommendedName>
    <alternativeName>
        <fullName evidence="2">tRNA (guanine(46)-N(7))-methyltransferase</fullName>
    </alternativeName>
    <alternativeName>
        <fullName evidence="2">tRNA(m7G46)-methyltransferase</fullName>
    </alternativeName>
</protein>
<comment type="function">
    <text evidence="2">Catalyzes the formation of N(7)-methylguanine at position 46 (m7G46) in tRNA.</text>
</comment>
<comment type="catalytic activity">
    <reaction evidence="2">
        <text>guanosine(46) in tRNA + S-adenosyl-L-methionine = N(7)-methylguanosine(46) in tRNA + S-adenosyl-L-homocysteine</text>
        <dbReference type="Rhea" id="RHEA:42708"/>
        <dbReference type="Rhea" id="RHEA-COMP:10188"/>
        <dbReference type="Rhea" id="RHEA-COMP:10189"/>
        <dbReference type="ChEBI" id="CHEBI:57856"/>
        <dbReference type="ChEBI" id="CHEBI:59789"/>
        <dbReference type="ChEBI" id="CHEBI:74269"/>
        <dbReference type="ChEBI" id="CHEBI:74480"/>
        <dbReference type="EC" id="2.1.1.33"/>
    </reaction>
</comment>
<comment type="pathway">
    <text evidence="2">tRNA modification; N(7)-methylguanine-tRNA biosynthesis.</text>
</comment>
<comment type="similarity">
    <text evidence="2">Belongs to the class I-like SAM-binding methyltransferase superfamily. TrmB family.</text>
</comment>
<reference key="1">
    <citation type="journal article" date="2001" name="J. Bacteriol.">
        <title>Genome of the bacterium Streptococcus pneumoniae strain R6.</title>
        <authorList>
            <person name="Hoskins J."/>
            <person name="Alborn W.E. Jr."/>
            <person name="Arnold J."/>
            <person name="Blaszczak L.C."/>
            <person name="Burgett S."/>
            <person name="DeHoff B.S."/>
            <person name="Estrem S.T."/>
            <person name="Fritz L."/>
            <person name="Fu D.-J."/>
            <person name="Fuller W."/>
            <person name="Geringer C."/>
            <person name="Gilmour R."/>
            <person name="Glass J.S."/>
            <person name="Khoja H."/>
            <person name="Kraft A.R."/>
            <person name="Lagace R.E."/>
            <person name="LeBlanc D.J."/>
            <person name="Lee L.N."/>
            <person name="Lefkowitz E.J."/>
            <person name="Lu J."/>
            <person name="Matsushima P."/>
            <person name="McAhren S.M."/>
            <person name="McHenney M."/>
            <person name="McLeaster K."/>
            <person name="Mundy C.W."/>
            <person name="Nicas T.I."/>
            <person name="Norris F.H."/>
            <person name="O'Gara M."/>
            <person name="Peery R.B."/>
            <person name="Robertson G.T."/>
            <person name="Rockey P."/>
            <person name="Sun P.-M."/>
            <person name="Winkler M.E."/>
            <person name="Yang Y."/>
            <person name="Young-Bellido M."/>
            <person name="Zhao G."/>
            <person name="Zook C.A."/>
            <person name="Baltz R.H."/>
            <person name="Jaskunas S.R."/>
            <person name="Rosteck P.R. Jr."/>
            <person name="Skatrud P.L."/>
            <person name="Glass J.I."/>
        </authorList>
    </citation>
    <scope>NUCLEOTIDE SEQUENCE [LARGE SCALE GENOMIC DNA]</scope>
    <source>
        <strain>ATCC BAA-255 / R6</strain>
    </source>
</reference>
<keyword id="KW-0489">Methyltransferase</keyword>
<keyword id="KW-1185">Reference proteome</keyword>
<keyword id="KW-0949">S-adenosyl-L-methionine</keyword>
<keyword id="KW-0808">Transferase</keyword>
<keyword id="KW-0819">tRNA processing</keyword>
<name>TRMB_STRR6</name>
<sequence>MRVRNRKGATELLEANPQYVVLNPLEAKAKWRDLFGNDNPIHVEVGSGKGAFVSGMAKQNPDINYIGIDIQKSVLSYALDKVLEVGVPNIKLLWVDGSDLTDYFEDGEIDRLYLNFSDPWPKKRHEKRRLTYKTFLDTFKRILPENGEIHFKTDNRGLFEYSLVSFSQYGMKLNGVWLDLHASDFEGNVMTEYEQKFSNKGQVIYRVEAEF</sequence>
<accession>P67507</accession>
<accession>Q8DQV7</accession>
<accession>Q97S62</accession>
<organism>
    <name type="scientific">Streptococcus pneumoniae (strain ATCC BAA-255 / R6)</name>
    <dbReference type="NCBI Taxonomy" id="171101"/>
    <lineage>
        <taxon>Bacteria</taxon>
        <taxon>Bacillati</taxon>
        <taxon>Bacillota</taxon>
        <taxon>Bacilli</taxon>
        <taxon>Lactobacillales</taxon>
        <taxon>Streptococcaceae</taxon>
        <taxon>Streptococcus</taxon>
    </lineage>
</organism>